<reference key="1">
    <citation type="submission" date="2006-08" db="EMBL/GenBank/DDBJ databases">
        <title>Complete sequence of Shewanella frigidimarina NCIMB 400.</title>
        <authorList>
            <consortium name="US DOE Joint Genome Institute"/>
            <person name="Copeland A."/>
            <person name="Lucas S."/>
            <person name="Lapidus A."/>
            <person name="Barry K."/>
            <person name="Detter J.C."/>
            <person name="Glavina del Rio T."/>
            <person name="Hammon N."/>
            <person name="Israni S."/>
            <person name="Dalin E."/>
            <person name="Tice H."/>
            <person name="Pitluck S."/>
            <person name="Fredrickson J.K."/>
            <person name="Kolker E."/>
            <person name="McCuel L.A."/>
            <person name="DiChristina T."/>
            <person name="Nealson K.H."/>
            <person name="Newman D."/>
            <person name="Tiedje J.M."/>
            <person name="Zhou J."/>
            <person name="Romine M.F."/>
            <person name="Culley D.E."/>
            <person name="Serres M."/>
            <person name="Chertkov O."/>
            <person name="Brettin T."/>
            <person name="Bruce D."/>
            <person name="Han C."/>
            <person name="Tapia R."/>
            <person name="Gilna P."/>
            <person name="Schmutz J."/>
            <person name="Larimer F."/>
            <person name="Land M."/>
            <person name="Hauser L."/>
            <person name="Kyrpides N."/>
            <person name="Mikhailova N."/>
            <person name="Richardson P."/>
        </authorList>
    </citation>
    <scope>NUCLEOTIDE SEQUENCE [LARGE SCALE GENOMIC DNA]</scope>
    <source>
        <strain>NCIMB 400</strain>
    </source>
</reference>
<feature type="chain" id="PRO_1000069644" description="Purine nucleoside phosphorylase DeoD-type">
    <location>
        <begin position="1"/>
        <end position="236"/>
    </location>
</feature>
<feature type="active site" description="Proton donor" evidence="2">
    <location>
        <position position="205"/>
    </location>
</feature>
<feature type="binding site" evidence="1">
    <location>
        <position position="5"/>
    </location>
    <ligand>
        <name>a purine D-ribonucleoside</name>
        <dbReference type="ChEBI" id="CHEBI:142355"/>
        <note>ligand shared between dimeric partners</note>
    </ligand>
</feature>
<feature type="binding site" description="in other chain" evidence="1">
    <location>
        <position position="21"/>
    </location>
    <ligand>
        <name>phosphate</name>
        <dbReference type="ChEBI" id="CHEBI:43474"/>
        <note>ligand shared between dimeric partners</note>
    </ligand>
</feature>
<feature type="binding site" description="in other chain" evidence="1">
    <location>
        <position position="25"/>
    </location>
    <ligand>
        <name>phosphate</name>
        <dbReference type="ChEBI" id="CHEBI:43474"/>
        <note>ligand shared between dimeric partners</note>
    </ligand>
</feature>
<feature type="binding site" evidence="1">
    <location>
        <position position="44"/>
    </location>
    <ligand>
        <name>phosphate</name>
        <dbReference type="ChEBI" id="CHEBI:43474"/>
        <note>ligand shared between dimeric partners</note>
    </ligand>
</feature>
<feature type="binding site" description="in other chain" evidence="1">
    <location>
        <begin position="88"/>
        <end position="91"/>
    </location>
    <ligand>
        <name>phosphate</name>
        <dbReference type="ChEBI" id="CHEBI:43474"/>
        <note>ligand shared between dimeric partners</note>
    </ligand>
</feature>
<feature type="binding site" description="in other chain" evidence="1">
    <location>
        <begin position="180"/>
        <end position="182"/>
    </location>
    <ligand>
        <name>a purine D-ribonucleoside</name>
        <dbReference type="ChEBI" id="CHEBI:142355"/>
        <note>ligand shared between dimeric partners</note>
    </ligand>
</feature>
<feature type="binding site" description="in other chain" evidence="1">
    <location>
        <begin position="204"/>
        <end position="205"/>
    </location>
    <ligand>
        <name>a purine D-ribonucleoside</name>
        <dbReference type="ChEBI" id="CHEBI:142355"/>
        <note>ligand shared between dimeric partners</note>
    </ligand>
</feature>
<feature type="site" description="Important for catalytic activity" evidence="2">
    <location>
        <position position="218"/>
    </location>
</feature>
<accession>Q086F7</accession>
<proteinExistence type="inferred from homology"/>
<gene>
    <name evidence="2" type="primary">deoD</name>
    <name type="ordered locus">Sfri_1005</name>
</gene>
<organism>
    <name type="scientific">Shewanella frigidimarina (strain NCIMB 400)</name>
    <dbReference type="NCBI Taxonomy" id="318167"/>
    <lineage>
        <taxon>Bacteria</taxon>
        <taxon>Pseudomonadati</taxon>
        <taxon>Pseudomonadota</taxon>
        <taxon>Gammaproteobacteria</taxon>
        <taxon>Alteromonadales</taxon>
        <taxon>Shewanellaceae</taxon>
        <taxon>Shewanella</taxon>
    </lineage>
</organism>
<evidence type="ECO:0000250" key="1">
    <source>
        <dbReference type="UniProtKB" id="P50389"/>
    </source>
</evidence>
<evidence type="ECO:0000255" key="2">
    <source>
        <dbReference type="HAMAP-Rule" id="MF_01627"/>
    </source>
</evidence>
<keyword id="KW-0328">Glycosyltransferase</keyword>
<keyword id="KW-1185">Reference proteome</keyword>
<keyword id="KW-0808">Transferase</keyword>
<name>DEOD_SHEFN</name>
<comment type="function">
    <text evidence="2">Catalyzes the reversible phosphorolytic breakdown of the N-glycosidic bond in the beta-(deoxy)ribonucleoside molecules, with the formation of the corresponding free purine bases and pentose-1-phosphate.</text>
</comment>
<comment type="catalytic activity">
    <reaction evidence="2">
        <text>a purine D-ribonucleoside + phosphate = a purine nucleobase + alpha-D-ribose 1-phosphate</text>
        <dbReference type="Rhea" id="RHEA:19805"/>
        <dbReference type="ChEBI" id="CHEBI:26386"/>
        <dbReference type="ChEBI" id="CHEBI:43474"/>
        <dbReference type="ChEBI" id="CHEBI:57720"/>
        <dbReference type="ChEBI" id="CHEBI:142355"/>
        <dbReference type="EC" id="2.4.2.1"/>
    </reaction>
</comment>
<comment type="catalytic activity">
    <reaction evidence="2">
        <text>a purine 2'-deoxy-D-ribonucleoside + phosphate = a purine nucleobase + 2-deoxy-alpha-D-ribose 1-phosphate</text>
        <dbReference type="Rhea" id="RHEA:36431"/>
        <dbReference type="ChEBI" id="CHEBI:26386"/>
        <dbReference type="ChEBI" id="CHEBI:43474"/>
        <dbReference type="ChEBI" id="CHEBI:57259"/>
        <dbReference type="ChEBI" id="CHEBI:142361"/>
        <dbReference type="EC" id="2.4.2.1"/>
    </reaction>
</comment>
<comment type="subunit">
    <text evidence="2">Homohexamer; trimer of homodimers.</text>
</comment>
<comment type="similarity">
    <text evidence="2">Belongs to the PNP/UDP phosphorylase family.</text>
</comment>
<dbReference type="EC" id="2.4.2.1" evidence="2"/>
<dbReference type="EMBL" id="CP000447">
    <property type="protein sequence ID" value="ABI70858.1"/>
    <property type="molecule type" value="Genomic_DNA"/>
</dbReference>
<dbReference type="RefSeq" id="WP_011636479.1">
    <property type="nucleotide sequence ID" value="NC_008345.1"/>
</dbReference>
<dbReference type="SMR" id="Q086F7"/>
<dbReference type="STRING" id="318167.Sfri_1005"/>
<dbReference type="KEGG" id="sfr:Sfri_1005"/>
<dbReference type="eggNOG" id="COG0813">
    <property type="taxonomic scope" value="Bacteria"/>
</dbReference>
<dbReference type="HOGENOM" id="CLU_068457_2_0_6"/>
<dbReference type="OrthoDB" id="9782889at2"/>
<dbReference type="Proteomes" id="UP000000684">
    <property type="component" value="Chromosome"/>
</dbReference>
<dbReference type="GO" id="GO:0005829">
    <property type="term" value="C:cytosol"/>
    <property type="evidence" value="ECO:0007669"/>
    <property type="project" value="TreeGrafter"/>
</dbReference>
<dbReference type="GO" id="GO:0004731">
    <property type="term" value="F:purine-nucleoside phosphorylase activity"/>
    <property type="evidence" value="ECO:0007669"/>
    <property type="project" value="UniProtKB-UniRule"/>
</dbReference>
<dbReference type="GO" id="GO:0006152">
    <property type="term" value="P:purine nucleoside catabolic process"/>
    <property type="evidence" value="ECO:0007669"/>
    <property type="project" value="TreeGrafter"/>
</dbReference>
<dbReference type="CDD" id="cd09006">
    <property type="entry name" value="PNP_EcPNPI-like"/>
    <property type="match status" value="1"/>
</dbReference>
<dbReference type="Gene3D" id="3.40.50.1580">
    <property type="entry name" value="Nucleoside phosphorylase domain"/>
    <property type="match status" value="1"/>
</dbReference>
<dbReference type="HAMAP" id="MF_01627">
    <property type="entry name" value="Pur_nucleosid_phosp"/>
    <property type="match status" value="1"/>
</dbReference>
<dbReference type="InterPro" id="IPR004402">
    <property type="entry name" value="DeoD-type"/>
</dbReference>
<dbReference type="InterPro" id="IPR018016">
    <property type="entry name" value="Nucleoside_phosphorylase_CS"/>
</dbReference>
<dbReference type="InterPro" id="IPR000845">
    <property type="entry name" value="Nucleoside_phosphorylase_d"/>
</dbReference>
<dbReference type="InterPro" id="IPR035994">
    <property type="entry name" value="Nucleoside_phosphorylase_sf"/>
</dbReference>
<dbReference type="NCBIfam" id="TIGR00107">
    <property type="entry name" value="deoD"/>
    <property type="match status" value="1"/>
</dbReference>
<dbReference type="NCBIfam" id="NF004489">
    <property type="entry name" value="PRK05819.1"/>
    <property type="match status" value="1"/>
</dbReference>
<dbReference type="NCBIfam" id="NF009914">
    <property type="entry name" value="PRK13374.1"/>
    <property type="match status" value="1"/>
</dbReference>
<dbReference type="PANTHER" id="PTHR43691:SF2">
    <property type="entry name" value="PURINE NUCLEOSIDE PHOSPHORYLASE DEOD-TYPE"/>
    <property type="match status" value="1"/>
</dbReference>
<dbReference type="PANTHER" id="PTHR43691">
    <property type="entry name" value="URIDINE PHOSPHORYLASE"/>
    <property type="match status" value="1"/>
</dbReference>
<dbReference type="Pfam" id="PF01048">
    <property type="entry name" value="PNP_UDP_1"/>
    <property type="match status" value="1"/>
</dbReference>
<dbReference type="SUPFAM" id="SSF53167">
    <property type="entry name" value="Purine and uridine phosphorylases"/>
    <property type="match status" value="1"/>
</dbReference>
<dbReference type="PROSITE" id="PS01232">
    <property type="entry name" value="PNP_UDP_1"/>
    <property type="match status" value="1"/>
</dbReference>
<protein>
    <recommendedName>
        <fullName evidence="2">Purine nucleoside phosphorylase DeoD-type</fullName>
        <shortName evidence="2">PNP</shortName>
        <ecNumber evidence="2">2.4.2.1</ecNumber>
    </recommendedName>
</protein>
<sequence length="236" mass="25502">MATPHINAVEGAFAETVLFPGDPLRAKYIAETFLENVEQVTDVRNMLGFTGTYKGKRISVMGSGMGIPSCSIYAHELIKDYGVKNLIRVGTCGAISTDVKVRDVIIGMGACTDSRVNRLRFKDNDFAAIADYSLLSAVVDSAKAHGTKIRVGNVFSADLFYTPDPQMFDVMEKMGILGVEMEAAGLYGVAHELGAKALCVVTVSDHIRTGEKTTSDERQTTFSDMIIMTLDAALTL</sequence>